<feature type="chain" id="PRO_0000433136" description="Aspartate racemase">
    <location>
        <begin position="1"/>
        <end position="232"/>
    </location>
</feature>
<feature type="active site" description="Proton donor/acceptor" evidence="1">
    <location>
        <position position="84"/>
    </location>
</feature>
<feature type="active site" description="Proton donor/acceptor" evidence="1">
    <location>
        <position position="195"/>
    </location>
</feature>
<feature type="binding site" evidence="1">
    <location>
        <begin position="49"/>
        <end position="51"/>
    </location>
    <ligand>
        <name>substrate</name>
    </ligand>
</feature>
<feature type="binding site" evidence="1">
    <location>
        <begin position="85"/>
        <end position="87"/>
    </location>
    <ligand>
        <name>substrate</name>
    </ligand>
</feature>
<feature type="binding site" evidence="1">
    <location>
        <position position="166"/>
    </location>
    <ligand>
        <name>substrate</name>
    </ligand>
</feature>
<keyword id="KW-0413">Isomerase</keyword>
<sequence length="232" mass="25428">MPERVIGILGGMGPLATADLFRRIVEKTPAKRDQDHPRIIIYNNPKIPDRTAFILGNGPDPRPELITSARKLEECGADFIIMPCNTAHFFAGTIQSSVIYPLVSMIEETAKRIEEMGLRKVGLLATDGTIKGMVYHRALLKRGIHIAVPNKKDQGLVMKAIYEGVKAGNLELGRELLLKVAKKLERRSEGIIAGCTEVSVVLKPGDLTVPLIDPMDVIAERAVKLALGVEDF</sequence>
<organism evidence="5">
    <name type="scientific">Thermococcus sp. (strain KS-8)</name>
    <dbReference type="NCBI Taxonomy" id="79680"/>
    <lineage>
        <taxon>Archaea</taxon>
        <taxon>Methanobacteriati</taxon>
        <taxon>Methanobacteriota</taxon>
        <taxon>Thermococci</taxon>
        <taxon>Thermococcales</taxon>
        <taxon>Thermococcaceae</taxon>
        <taxon>Thermococcus</taxon>
    </lineage>
</organism>
<dbReference type="EC" id="5.1.1.13" evidence="2"/>
<dbReference type="EMBL" id="AB015880">
    <property type="protein sequence ID" value="BAA35091.1"/>
    <property type="molecule type" value="Genomic_DNA"/>
</dbReference>
<dbReference type="SMR" id="O93779"/>
<dbReference type="GO" id="GO:0047689">
    <property type="term" value="F:aspartate racemase activity"/>
    <property type="evidence" value="ECO:0007669"/>
    <property type="project" value="UniProtKB-EC"/>
</dbReference>
<dbReference type="Gene3D" id="3.40.50.1860">
    <property type="match status" value="2"/>
</dbReference>
<dbReference type="InterPro" id="IPR015942">
    <property type="entry name" value="Asp/Glu/hydantoin_racemase"/>
</dbReference>
<dbReference type="InterPro" id="IPR001920">
    <property type="entry name" value="Asp/Glu_race"/>
</dbReference>
<dbReference type="InterPro" id="IPR004380">
    <property type="entry name" value="Asp_race"/>
</dbReference>
<dbReference type="NCBIfam" id="TIGR00035">
    <property type="entry name" value="asp_race"/>
    <property type="match status" value="1"/>
</dbReference>
<dbReference type="PANTHER" id="PTHR21198:SF7">
    <property type="entry name" value="ASPARTATE-GLUTAMATE RACEMASE FAMILY"/>
    <property type="match status" value="1"/>
</dbReference>
<dbReference type="PANTHER" id="PTHR21198">
    <property type="entry name" value="GLUTAMATE RACEMASE"/>
    <property type="match status" value="1"/>
</dbReference>
<dbReference type="Pfam" id="PF01177">
    <property type="entry name" value="Asp_Glu_race"/>
    <property type="match status" value="1"/>
</dbReference>
<dbReference type="SUPFAM" id="SSF53681">
    <property type="entry name" value="Aspartate/glutamate racemase"/>
    <property type="match status" value="2"/>
</dbReference>
<dbReference type="PROSITE" id="PS00923">
    <property type="entry name" value="ASP_GLU_RACEMASE_1"/>
    <property type="match status" value="1"/>
</dbReference>
<dbReference type="PROSITE" id="PS00924">
    <property type="entry name" value="ASP_GLU_RACEMASE_2"/>
    <property type="match status" value="1"/>
</dbReference>
<comment type="catalytic activity">
    <reaction evidence="2">
        <text>L-aspartate = D-aspartate</text>
        <dbReference type="Rhea" id="RHEA:14973"/>
        <dbReference type="ChEBI" id="CHEBI:29990"/>
        <dbReference type="ChEBI" id="CHEBI:29991"/>
        <dbReference type="EC" id="5.1.1.13"/>
    </reaction>
</comment>
<comment type="similarity">
    <text evidence="4">Belongs to the aspartate/glutamate racemases family.</text>
</comment>
<proteinExistence type="evidence at protein level"/>
<evidence type="ECO:0000250" key="1">
    <source>
        <dbReference type="UniProtKB" id="O58403"/>
    </source>
</evidence>
<evidence type="ECO:0000269" key="2">
    <source>
    </source>
</evidence>
<evidence type="ECO:0000303" key="3">
    <source>
    </source>
</evidence>
<evidence type="ECO:0000305" key="4"/>
<evidence type="ECO:0000312" key="5">
    <source>
        <dbReference type="EMBL" id="BAA35091.1"/>
    </source>
</evidence>
<accession>O93779</accession>
<protein>
    <recommendedName>
        <fullName evidence="3">Aspartate racemase</fullName>
        <ecNumber evidence="2">5.1.1.13</ecNumber>
    </recommendedName>
</protein>
<reference evidence="5" key="1">
    <citation type="journal article" date="1999" name="J. Bacteriol.">
        <title>Occurrence of free D-amino acids and aspartate racemases in hyperthermophilic archaea.</title>
        <authorList>
            <person name="Matsumoto M."/>
            <person name="Homma H."/>
            <person name="Long Z."/>
            <person name="Imai K."/>
            <person name="Iida T."/>
            <person name="Maruyama T."/>
            <person name="Aikawa Y."/>
            <person name="Endo I."/>
            <person name="Yohda M."/>
        </authorList>
    </citation>
    <scope>NUCLEOTIDE SEQUENCE [GENOMIC DNA]</scope>
    <scope>CATALYTIC ACTIVITY</scope>
    <source>
        <strain evidence="5">KS-8</strain>
    </source>
</reference>
<name>RACD_THEK8</name>